<keyword id="KW-0008">Acetylcholine receptor inhibiting toxin</keyword>
<keyword id="KW-0027">Amidation</keyword>
<keyword id="KW-1015">Disulfide bond</keyword>
<keyword id="KW-0872">Ion channel impairing toxin</keyword>
<keyword id="KW-0528">Neurotoxin</keyword>
<keyword id="KW-0629">Postsynaptic neurotoxin</keyword>
<keyword id="KW-0964">Secreted</keyword>
<keyword id="KW-0732">Signal</keyword>
<keyword id="KW-0800">Toxin</keyword>
<feature type="signal peptide" evidence="5">
    <location>
        <begin position="1"/>
        <end position="17"/>
    </location>
</feature>
<feature type="propeptide" id="PRO_0000380618" evidence="1">
    <location>
        <begin position="18"/>
        <end position="43"/>
    </location>
</feature>
<feature type="peptide" id="PRO_0000380619" description="Alpha-conotoxin-like Ai1.2">
    <location>
        <begin position="44"/>
        <end position="61"/>
    </location>
</feature>
<feature type="region of interest" description="Ser-Xaa-Pro motif, crucial for potent interaction with nAChR" evidence="3">
    <location>
        <begin position="48"/>
        <end position="50"/>
    </location>
</feature>
<feature type="modified residue" description="Glycine amide" evidence="4">
    <location>
        <position position="61"/>
    </location>
</feature>
<feature type="disulfide bond" evidence="3">
    <location>
        <begin position="46"/>
        <end position="52"/>
    </location>
</feature>
<feature type="disulfide bond" evidence="3">
    <location>
        <begin position="47"/>
        <end position="60"/>
    </location>
</feature>
<protein>
    <recommendedName>
        <fullName evidence="7">Alpha-conotoxin-like Ai1.2</fullName>
    </recommendedName>
    <alternativeName>
        <fullName evidence="8 9">Alpha-conotoxin-like 291</fullName>
    </alternativeName>
</protein>
<reference key="1">
    <citation type="patent" date="2004-09-28" number="US6797808">
        <authorList>
            <person name="Watkins M."/>
            <person name="Olivera B.M."/>
            <person name="Hillyard D.R."/>
            <person name="McIntosh M.J."/>
            <person name="Jones R.M."/>
        </authorList>
    </citation>
    <scope>NUCLEOTIDE SEQUENCE [GENOMIC DNA]</scope>
</reference>
<reference key="2">
    <citation type="patent" date="2007-11-07" number="EP1852440">
        <title>Alpha-conotoxin peptides.</title>
        <authorList>
            <person name="Watkins M."/>
            <person name="Hillyard D.R."/>
            <person name="McIntosh M.J."/>
            <person name="Jones R.M."/>
            <person name="Olivera B.M."/>
        </authorList>
    </citation>
    <scope>NUCLEOTIDE SEQUENCE</scope>
</reference>
<reference key="3">
    <citation type="journal article" date="2016" name="Angew. Chem. Int. Ed.">
        <title>Structure-activity studies of cysteine-rich alpha-conotoxins that inhibit high-voltage-activated calcium channels via GABA(B) receptor activation reveal a minimal functional motif.</title>
        <authorList>
            <person name="Carstens B.B."/>
            <person name="Berecki G."/>
            <person name="Daniel J.T."/>
            <person name="Lee H.S."/>
            <person name="Jackson K.A."/>
            <person name="Tae H.S."/>
            <person name="Sadeghi M."/>
            <person name="Castro J."/>
            <person name="O'Donnell T."/>
            <person name="Deiteren A."/>
            <person name="Brierley S.M."/>
            <person name="Craik D.J."/>
            <person name="Adams D.J."/>
            <person name="Clark R.J."/>
        </authorList>
    </citation>
    <scope>FUNCTION</scope>
    <scope>SYNTHESIS OF 44-60</scope>
</reference>
<proteinExistence type="inferred from homology"/>
<sequence>MFTVFLLVVLATTVVSSTSGRRAFRGRNAAAKASGLVGLTDRRPECCSDPRCNSTHPELCGGRR</sequence>
<name>CA12_CONAJ</name>
<evidence type="ECO:0000250" key="1"/>
<evidence type="ECO:0000250" key="2">
    <source>
        <dbReference type="UniProtKB" id="P0CE73"/>
    </source>
</evidence>
<evidence type="ECO:0000250" key="3">
    <source>
        <dbReference type="UniProtKB" id="P56636"/>
    </source>
</evidence>
<evidence type="ECO:0000250" key="4">
    <source>
        <dbReference type="UniProtKB" id="P85886"/>
    </source>
</evidence>
<evidence type="ECO:0000255" key="5"/>
<evidence type="ECO:0000269" key="6">
    <source>
    </source>
</evidence>
<evidence type="ECO:0000303" key="7">
    <source>
    </source>
</evidence>
<evidence type="ECO:0000303" key="8">
    <source ref="1"/>
</evidence>
<evidence type="ECO:0000303" key="9">
    <source ref="2"/>
</evidence>
<evidence type="ECO:0000305" key="10"/>
<organism>
    <name type="scientific">Conus ammiralis</name>
    <name type="common">Admiral cone</name>
    <dbReference type="NCBI Taxonomy" id="97188"/>
    <lineage>
        <taxon>Eukaryota</taxon>
        <taxon>Metazoa</taxon>
        <taxon>Spiralia</taxon>
        <taxon>Lophotrochozoa</taxon>
        <taxon>Mollusca</taxon>
        <taxon>Gastropoda</taxon>
        <taxon>Caenogastropoda</taxon>
        <taxon>Neogastropoda</taxon>
        <taxon>Conoidea</taxon>
        <taxon>Conidae</taxon>
        <taxon>Conus</taxon>
        <taxon>Cylinder</taxon>
    </lineage>
</organism>
<comment type="function">
    <text evidence="2">Alpha-conotoxins act on postsynaptic membranes, they bind to the nicotinic acetylcholine receptors (nAChR) and thus inhibit them (By similarity).</text>
</comment>
<comment type="subcellular location">
    <subcellularLocation>
        <location evidence="10">Secreted</location>
    </subcellularLocation>
</comment>
<comment type="tissue specificity">
    <text evidence="10">Expressed by the venom duct.</text>
</comment>
<comment type="domain">
    <text evidence="10">The cysteine framework is I (CC-C-C). Alpha4/7 pattern.</text>
</comment>
<comment type="miscellaneous">
    <text evidence="6">Negative results: does not inhibit high voltage-activated (HVA) calcium channel currents in rat DRG neurons (at 1 uM toxin) (PubMed:26948522).</text>
</comment>
<comment type="similarity">
    <text evidence="10">Belongs to the conotoxin A superfamily.</text>
</comment>
<comment type="caution">
    <text evidence="6">The synthetic peptide described in PubMed:26948522 is one residue shorter than the mature sequence shown in this entry (44-60) (the Gly-61 is removed) and the Cys-60 is amidated.</text>
</comment>
<dbReference type="EMBL" id="AR584879">
    <property type="status" value="NOT_ANNOTATED_CDS"/>
    <property type="molecule type" value="Genomic_DNA"/>
</dbReference>
<dbReference type="EMBL" id="FB300121">
    <property type="protein sequence ID" value="CAR81592.1"/>
    <property type="molecule type" value="Unassigned_DNA"/>
</dbReference>
<dbReference type="ConoServer" id="347">
    <property type="toxin name" value="Ai1.2 patent"/>
</dbReference>
<dbReference type="ConoServer" id="2945">
    <property type="toxin name" value="Ai1.2 precursor"/>
</dbReference>
<dbReference type="GO" id="GO:0005576">
    <property type="term" value="C:extracellular region"/>
    <property type="evidence" value="ECO:0007669"/>
    <property type="project" value="UniProtKB-SubCell"/>
</dbReference>
<dbReference type="GO" id="GO:0035792">
    <property type="term" value="C:host cell postsynaptic membrane"/>
    <property type="evidence" value="ECO:0007669"/>
    <property type="project" value="UniProtKB-KW"/>
</dbReference>
<dbReference type="GO" id="GO:0030550">
    <property type="term" value="F:acetylcholine receptor inhibitor activity"/>
    <property type="evidence" value="ECO:0007669"/>
    <property type="project" value="UniProtKB-KW"/>
</dbReference>
<dbReference type="GO" id="GO:0099106">
    <property type="term" value="F:ion channel regulator activity"/>
    <property type="evidence" value="ECO:0007669"/>
    <property type="project" value="UniProtKB-KW"/>
</dbReference>
<dbReference type="GO" id="GO:0090729">
    <property type="term" value="F:toxin activity"/>
    <property type="evidence" value="ECO:0007669"/>
    <property type="project" value="UniProtKB-KW"/>
</dbReference>
<dbReference type="InterPro" id="IPR009958">
    <property type="entry name" value="Conotoxin_a-typ"/>
</dbReference>
<dbReference type="InterPro" id="IPR018072">
    <property type="entry name" value="Conotoxin_a-typ_CS"/>
</dbReference>
<dbReference type="Pfam" id="PF07365">
    <property type="entry name" value="Toxin_8"/>
    <property type="match status" value="1"/>
</dbReference>
<dbReference type="PROSITE" id="PS60014">
    <property type="entry name" value="ALPHA_CONOTOXIN"/>
    <property type="match status" value="1"/>
</dbReference>
<accession>P0CB08</accession>
<accession>P0CB13</accession>